<keyword id="KW-0963">Cytoplasm</keyword>
<keyword id="KW-0520">NAD</keyword>
<keyword id="KW-0560">Oxidoreductase</keyword>
<keyword id="KW-0664">Pyridoxine biosynthesis</keyword>
<keyword id="KW-1185">Reference proteome</keyword>
<feature type="chain" id="PRO_0000297459" description="Erythronate-4-phosphate dehydrogenase">
    <location>
        <begin position="1"/>
        <end position="383"/>
    </location>
</feature>
<feature type="active site" evidence="1">
    <location>
        <position position="208"/>
    </location>
</feature>
<feature type="active site" evidence="1">
    <location>
        <position position="237"/>
    </location>
</feature>
<feature type="active site" description="Proton donor" evidence="1">
    <location>
        <position position="254"/>
    </location>
</feature>
<feature type="binding site" evidence="1">
    <location>
        <position position="45"/>
    </location>
    <ligand>
        <name>substrate</name>
    </ligand>
</feature>
<feature type="binding site" evidence="1">
    <location>
        <position position="67"/>
    </location>
    <ligand>
        <name>substrate</name>
    </ligand>
</feature>
<feature type="binding site" evidence="1">
    <location>
        <position position="147"/>
    </location>
    <ligand>
        <name>NAD(+)</name>
        <dbReference type="ChEBI" id="CHEBI:57540"/>
    </ligand>
</feature>
<feature type="binding site" evidence="1">
    <location>
        <position position="232"/>
    </location>
    <ligand>
        <name>NAD(+)</name>
        <dbReference type="ChEBI" id="CHEBI:57540"/>
    </ligand>
</feature>
<feature type="binding site" evidence="1">
    <location>
        <position position="257"/>
    </location>
    <ligand>
        <name>NAD(+)</name>
        <dbReference type="ChEBI" id="CHEBI:57540"/>
    </ligand>
</feature>
<feature type="binding site" evidence="1">
    <location>
        <position position="258"/>
    </location>
    <ligand>
        <name>substrate</name>
    </ligand>
</feature>
<proteinExistence type="inferred from homology"/>
<reference key="1">
    <citation type="journal article" date="2008" name="BMC Genomics">
        <title>Genomics of an extreme psychrophile, Psychromonas ingrahamii.</title>
        <authorList>
            <person name="Riley M."/>
            <person name="Staley J.T."/>
            <person name="Danchin A."/>
            <person name="Wang T.Z."/>
            <person name="Brettin T.S."/>
            <person name="Hauser L.J."/>
            <person name="Land M.L."/>
            <person name="Thompson L.S."/>
        </authorList>
    </citation>
    <scope>NUCLEOTIDE SEQUENCE [LARGE SCALE GENOMIC DNA]</scope>
    <source>
        <strain>DSM 17664 / CCUG 51855 / 37</strain>
    </source>
</reference>
<dbReference type="EC" id="1.1.1.290" evidence="1"/>
<dbReference type="EMBL" id="CP000510">
    <property type="protein sequence ID" value="ABM03759.1"/>
    <property type="molecule type" value="Genomic_DNA"/>
</dbReference>
<dbReference type="RefSeq" id="WP_011770319.1">
    <property type="nucleotide sequence ID" value="NC_008709.1"/>
</dbReference>
<dbReference type="SMR" id="A1SW94"/>
<dbReference type="STRING" id="357804.Ping_1994"/>
<dbReference type="KEGG" id="pin:Ping_1994"/>
<dbReference type="eggNOG" id="COG0111">
    <property type="taxonomic scope" value="Bacteria"/>
</dbReference>
<dbReference type="HOGENOM" id="CLU_019796_4_0_6"/>
<dbReference type="OrthoDB" id="9770208at2"/>
<dbReference type="UniPathway" id="UPA00244">
    <property type="reaction ID" value="UER00310"/>
</dbReference>
<dbReference type="Proteomes" id="UP000000639">
    <property type="component" value="Chromosome"/>
</dbReference>
<dbReference type="GO" id="GO:0005829">
    <property type="term" value="C:cytosol"/>
    <property type="evidence" value="ECO:0007669"/>
    <property type="project" value="TreeGrafter"/>
</dbReference>
<dbReference type="GO" id="GO:0033711">
    <property type="term" value="F:4-phosphoerythronate dehydrogenase activity"/>
    <property type="evidence" value="ECO:0007669"/>
    <property type="project" value="UniProtKB-EC"/>
</dbReference>
<dbReference type="GO" id="GO:0051287">
    <property type="term" value="F:NAD binding"/>
    <property type="evidence" value="ECO:0007669"/>
    <property type="project" value="InterPro"/>
</dbReference>
<dbReference type="GO" id="GO:0046983">
    <property type="term" value="F:protein dimerization activity"/>
    <property type="evidence" value="ECO:0007669"/>
    <property type="project" value="InterPro"/>
</dbReference>
<dbReference type="GO" id="GO:0036001">
    <property type="term" value="P:'de novo' pyridoxal 5'-phosphate biosynthetic process"/>
    <property type="evidence" value="ECO:0007669"/>
    <property type="project" value="TreeGrafter"/>
</dbReference>
<dbReference type="GO" id="GO:0008615">
    <property type="term" value="P:pyridoxine biosynthetic process"/>
    <property type="evidence" value="ECO:0007669"/>
    <property type="project" value="UniProtKB-UniRule"/>
</dbReference>
<dbReference type="CDD" id="cd12158">
    <property type="entry name" value="ErythrP_dh"/>
    <property type="match status" value="1"/>
</dbReference>
<dbReference type="Gene3D" id="3.30.1370.170">
    <property type="match status" value="1"/>
</dbReference>
<dbReference type="Gene3D" id="3.40.50.720">
    <property type="entry name" value="NAD(P)-binding Rossmann-like Domain"/>
    <property type="match status" value="2"/>
</dbReference>
<dbReference type="HAMAP" id="MF_01825">
    <property type="entry name" value="PdxB"/>
    <property type="match status" value="1"/>
</dbReference>
<dbReference type="InterPro" id="IPR006139">
    <property type="entry name" value="D-isomer_2_OHA_DH_cat_dom"/>
</dbReference>
<dbReference type="InterPro" id="IPR006140">
    <property type="entry name" value="D-isomer_DH_NAD-bd"/>
</dbReference>
<dbReference type="InterPro" id="IPR020921">
    <property type="entry name" value="Erythronate-4-P_DHase"/>
</dbReference>
<dbReference type="InterPro" id="IPR024531">
    <property type="entry name" value="Erythronate-4-P_DHase_dimer"/>
</dbReference>
<dbReference type="InterPro" id="IPR036291">
    <property type="entry name" value="NAD(P)-bd_dom_sf"/>
</dbReference>
<dbReference type="InterPro" id="IPR038251">
    <property type="entry name" value="PdxB_dimer_sf"/>
</dbReference>
<dbReference type="PANTHER" id="PTHR42938">
    <property type="entry name" value="FORMATE DEHYDROGENASE 1"/>
    <property type="match status" value="1"/>
</dbReference>
<dbReference type="PANTHER" id="PTHR42938:SF9">
    <property type="entry name" value="FORMATE DEHYDROGENASE 1"/>
    <property type="match status" value="1"/>
</dbReference>
<dbReference type="Pfam" id="PF00389">
    <property type="entry name" value="2-Hacid_dh"/>
    <property type="match status" value="1"/>
</dbReference>
<dbReference type="Pfam" id="PF02826">
    <property type="entry name" value="2-Hacid_dh_C"/>
    <property type="match status" value="1"/>
</dbReference>
<dbReference type="Pfam" id="PF11890">
    <property type="entry name" value="DUF3410"/>
    <property type="match status" value="1"/>
</dbReference>
<dbReference type="SUPFAM" id="SSF52283">
    <property type="entry name" value="Formate/glycerate dehydrogenase catalytic domain-like"/>
    <property type="match status" value="1"/>
</dbReference>
<dbReference type="SUPFAM" id="SSF51735">
    <property type="entry name" value="NAD(P)-binding Rossmann-fold domains"/>
    <property type="match status" value="1"/>
</dbReference>
<protein>
    <recommendedName>
        <fullName evidence="1">Erythronate-4-phosphate dehydrogenase</fullName>
        <ecNumber evidence="1">1.1.1.290</ecNumber>
    </recommendedName>
</protein>
<evidence type="ECO:0000255" key="1">
    <source>
        <dbReference type="HAMAP-Rule" id="MF_01825"/>
    </source>
</evidence>
<organism>
    <name type="scientific">Psychromonas ingrahamii (strain DSM 17664 / CCUG 51855 / 37)</name>
    <dbReference type="NCBI Taxonomy" id="357804"/>
    <lineage>
        <taxon>Bacteria</taxon>
        <taxon>Pseudomonadati</taxon>
        <taxon>Pseudomonadota</taxon>
        <taxon>Gammaproteobacteria</taxon>
        <taxon>Alteromonadales</taxon>
        <taxon>Psychromonadaceae</taxon>
        <taxon>Psychromonas</taxon>
    </lineage>
</organism>
<sequence length="383" mass="42788">MNIYIDENIPYARDFFTGHGNLHFFSGRNASAEQLIDADVLLVRSITEVNEKLLSLNKKLKFVGTATIGTDHIDQTYLKNRGIVFSSAPGCNKVSVAEYILSSLLVLADQQQFILSDKSIAIVGAGNTGTAVYQRLNALGMNCKLYDPPLLLAGDKRQFCTFEEVLEADIISLHVPKVVQGPFPTVHMFDSKVLSQLTNGQILLNAARGDLIDNQALLELAEQGLTPTLVLDVWENEPHINQQLLPYVAIATPHIAGYSLDGRVRGTEMLYQALCDFLQLKGKYTTADFVHRAAINSVSISKKIDQPLIKSLMHLIFDVRRDDALFREMIEDVDGFDTMRKTYQERRELSTLTVESSVEQNTLLQLLGFSTNVQNEIKETHEI</sequence>
<name>PDXB_PSYIN</name>
<accession>A1SW94</accession>
<comment type="function">
    <text evidence="1">Catalyzes the oxidation of erythronate-4-phosphate to 3-hydroxy-2-oxo-4-phosphonooxybutanoate.</text>
</comment>
<comment type="catalytic activity">
    <reaction evidence="1">
        <text>4-phospho-D-erythronate + NAD(+) = (R)-3-hydroxy-2-oxo-4-phosphooxybutanoate + NADH + H(+)</text>
        <dbReference type="Rhea" id="RHEA:18829"/>
        <dbReference type="ChEBI" id="CHEBI:15378"/>
        <dbReference type="ChEBI" id="CHEBI:57540"/>
        <dbReference type="ChEBI" id="CHEBI:57945"/>
        <dbReference type="ChEBI" id="CHEBI:58538"/>
        <dbReference type="ChEBI" id="CHEBI:58766"/>
        <dbReference type="EC" id="1.1.1.290"/>
    </reaction>
</comment>
<comment type="pathway">
    <text evidence="1">Cofactor biosynthesis; pyridoxine 5'-phosphate biosynthesis; pyridoxine 5'-phosphate from D-erythrose 4-phosphate: step 2/5.</text>
</comment>
<comment type="subunit">
    <text evidence="1">Homodimer.</text>
</comment>
<comment type="subcellular location">
    <subcellularLocation>
        <location evidence="1">Cytoplasm</location>
    </subcellularLocation>
</comment>
<comment type="similarity">
    <text evidence="1">Belongs to the D-isomer specific 2-hydroxyacid dehydrogenase family. PdxB subfamily.</text>
</comment>
<gene>
    <name evidence="1" type="primary">pdxB</name>
    <name type="ordered locus">Ping_1994</name>
</gene>